<organism>
    <name type="scientific">Saccharomyces cerevisiae (strain AWRI1631)</name>
    <name type="common">Baker's yeast</name>
    <dbReference type="NCBI Taxonomy" id="545124"/>
    <lineage>
        <taxon>Eukaryota</taxon>
        <taxon>Fungi</taxon>
        <taxon>Dikarya</taxon>
        <taxon>Ascomycota</taxon>
        <taxon>Saccharomycotina</taxon>
        <taxon>Saccharomycetes</taxon>
        <taxon>Saccharomycetales</taxon>
        <taxon>Saccharomycetaceae</taxon>
        <taxon>Saccharomyces</taxon>
    </lineage>
</organism>
<gene>
    <name type="primary">SAP190</name>
    <name type="ORF">AWRI1631_112520</name>
</gene>
<evidence type="ECO:0000250" key="1"/>
<evidence type="ECO:0000250" key="2">
    <source>
        <dbReference type="UniProtKB" id="P36123"/>
    </source>
</evidence>
<evidence type="ECO:0000256" key="3">
    <source>
        <dbReference type="SAM" id="MobiDB-lite"/>
    </source>
</evidence>
<evidence type="ECO:0000305" key="4"/>
<sequence length="1033" mass="117188">MSGSFWKFGQDYSIESPVSKILNSAFIKINKDQDDDVPTGTCEENIADDEDNSSHDYAASEDNVVNENEEKEEENTLPTTESEYENYRPNLDVLDDLLDDDELYTELMCSNFKLLIFLKYPEVLSKLIEYVTNEKILDEETDSAKKPEIIEGVNDHPILIERDRKDKKEDAEEGGDSEETTNDSDHDSGDERSVDSEETSITLPPESEEQVETRRARIAAEILSADVWPISAAIMQNKDLLGRLWSILDHPAPLPIPASTYFMKINERLLDMDITGMLEFILSRDSLVARFLTHVDNPSLMDFLLKVISTDKPDSPTGVIKILKSQELIPKLLDHLNPEYGISTQSAAGDFIKAFVTLSTNSSNELASGIGPNELTRQLVSEEMIEKLIKIMLKGGTSLSNGVGIIIELIRKNNSDYDFIQLVYTTLESHPPTDRDPIHLIHLVKLFAKHMPDFADMLDKTKLPLMEMPFGNIEPLGFERFKICELIAELLHCSNMTLLNEPNGEMIAQERDIERAKELETSTEKENITFIVDNKSSYYDKDCVEKDITENLGALQINNQGSEEDELNDTGVSSVKLDVKSDAKVVEGLENDASGVELYDETLSDTESVRECLREKPLVGDRLKIALEDTKILISILDMFTEFPWNNFLHNVIFDIAQQIFNGPLKTGYNRFLLKDYLVDAYLTKKIVDADKACQDYEKKTGLRYGYMGHLTLVAEEISKFKEYIDEMKLTFCNTAVSDRLEEPFWKEYSETILADTREKYNTVLGDFGNDQESDDDVIRNSDSEDIIGDTEGNENYGNGENDELLSNGHDSGNMDLYYNFNNNENEENEEDYAEYSDVDNKNYYNNVETNDDDYDSDDGKSKSAESEFTDKISEHRDGNSLYNEDNDENGSDKWTSGTSLFPPDHFPSRSQPSDPKLQDQNIFHHQFDFEGVGDDDDYMDPNDDGQSYARPGNPLYTTPKTPPRPKTILFNSLSALDNNGEDEEVALGTSVDDRMDNEISSDEEDSEDEDEENDMGNEEGYSLYRSRSKEAF</sequence>
<name>SA190_YEAS6</name>
<reference key="1">
    <citation type="journal article" date="2008" name="FEMS Yeast Res.">
        <title>Comparative genome analysis of a Saccharomyces cerevisiae wine strain.</title>
        <authorList>
            <person name="Borneman A.R."/>
            <person name="Forgan A.H."/>
            <person name="Pretorius I.S."/>
            <person name="Chambers P.J."/>
        </authorList>
    </citation>
    <scope>NUCLEOTIDE SEQUENCE [LARGE SCALE GENOMIC DNA]</scope>
    <source>
        <strain>AWRI1631</strain>
    </source>
</reference>
<feature type="chain" id="PRO_0000393319" description="SIT4-associating protein SAP190">
    <location>
        <begin position="1"/>
        <end position="1033"/>
    </location>
</feature>
<feature type="region of interest" description="Disordered" evidence="3">
    <location>
        <begin position="32"/>
        <end position="82"/>
    </location>
</feature>
<feature type="region of interest" description="Disordered" evidence="3">
    <location>
        <begin position="147"/>
        <end position="213"/>
    </location>
</feature>
<feature type="region of interest" description="Disordered" evidence="3">
    <location>
        <begin position="768"/>
        <end position="813"/>
    </location>
</feature>
<feature type="region of interest" description="Disordered" evidence="3">
    <location>
        <begin position="828"/>
        <end position="1033"/>
    </location>
</feature>
<feature type="compositionally biased region" description="Basic and acidic residues" evidence="3">
    <location>
        <begin position="158"/>
        <end position="170"/>
    </location>
</feature>
<feature type="compositionally biased region" description="Acidic residues" evidence="3">
    <location>
        <begin position="171"/>
        <end position="182"/>
    </location>
</feature>
<feature type="compositionally biased region" description="Basic and acidic residues" evidence="3">
    <location>
        <begin position="183"/>
        <end position="195"/>
    </location>
</feature>
<feature type="compositionally biased region" description="Acidic residues" evidence="3">
    <location>
        <begin position="784"/>
        <end position="793"/>
    </location>
</feature>
<feature type="compositionally biased region" description="Acidic residues" evidence="3">
    <location>
        <begin position="828"/>
        <end position="838"/>
    </location>
</feature>
<feature type="compositionally biased region" description="Basic and acidic residues" evidence="3">
    <location>
        <begin position="858"/>
        <end position="879"/>
    </location>
</feature>
<feature type="compositionally biased region" description="Polar residues" evidence="3">
    <location>
        <begin position="909"/>
        <end position="924"/>
    </location>
</feature>
<feature type="compositionally biased region" description="Acidic residues" evidence="3">
    <location>
        <begin position="932"/>
        <end position="944"/>
    </location>
</feature>
<feature type="compositionally biased region" description="Acidic residues" evidence="3">
    <location>
        <begin position="1000"/>
        <end position="1018"/>
    </location>
</feature>
<feature type="modified residue" description="Phosphoserine" evidence="2">
    <location>
        <position position="774"/>
    </location>
</feature>
<feature type="modified residue" description="Phosphoserine" evidence="2">
    <location>
        <position position="857"/>
    </location>
</feature>
<feature type="modified residue" description="Phosphoserine" evidence="2">
    <location>
        <position position="862"/>
    </location>
</feature>
<feature type="modified residue" description="Phosphoserine" evidence="2">
    <location>
        <position position="892"/>
    </location>
</feature>
<feature type="modified residue" description="Phosphothreonine" evidence="2">
    <location>
        <position position="990"/>
    </location>
</feature>
<feature type="modified residue" description="Phosphoserine" evidence="2">
    <location>
        <position position="991"/>
    </location>
</feature>
<proteinExistence type="inferred from homology"/>
<keyword id="KW-0131">Cell cycle</keyword>
<keyword id="KW-0963">Cytoplasm</keyword>
<keyword id="KW-0597">Phosphoprotein</keyword>
<accession>B5VMH6</accession>
<comment type="function">
    <text evidence="1">Positive regulator of protein phosphatase SIT4. Involved in the general amino acid control (GAAC) response regulated by TOR. Involved in the dephosphorylation of the elongator complex subunit IKI3 (By similarity).</text>
</comment>
<comment type="subunit">
    <text evidence="1">Associates with the SIT4 protein phosphatase catalytic subunit in a cell-cycle-dependent manner.</text>
</comment>
<comment type="subcellular location">
    <subcellularLocation>
        <location evidence="4">Cytoplasm</location>
    </subcellularLocation>
</comment>
<comment type="PTM">
    <text evidence="1">Hyperphosphorylated in the absence of SIT4.</text>
</comment>
<comment type="similarity">
    <text evidence="4">Belongs to the SAPS family.</text>
</comment>
<dbReference type="EMBL" id="ABSV01001499">
    <property type="protein sequence ID" value="EDZ70867.1"/>
    <property type="molecule type" value="Genomic_DNA"/>
</dbReference>
<dbReference type="SMR" id="B5VMH6"/>
<dbReference type="OrthoDB" id="36824at4893"/>
<dbReference type="Proteomes" id="UP000008988">
    <property type="component" value="Unassembled WGS sequence"/>
</dbReference>
<dbReference type="GO" id="GO:0005829">
    <property type="term" value="C:cytosol"/>
    <property type="evidence" value="ECO:0007669"/>
    <property type="project" value="TreeGrafter"/>
</dbReference>
<dbReference type="GO" id="GO:0005634">
    <property type="term" value="C:nucleus"/>
    <property type="evidence" value="ECO:0007669"/>
    <property type="project" value="TreeGrafter"/>
</dbReference>
<dbReference type="GO" id="GO:0019903">
    <property type="term" value="F:protein phosphatase binding"/>
    <property type="evidence" value="ECO:0007669"/>
    <property type="project" value="InterPro"/>
</dbReference>
<dbReference type="GO" id="GO:0019888">
    <property type="term" value="F:protein phosphatase regulator activity"/>
    <property type="evidence" value="ECO:0007669"/>
    <property type="project" value="TreeGrafter"/>
</dbReference>
<dbReference type="InterPro" id="IPR007587">
    <property type="entry name" value="SAPS"/>
</dbReference>
<dbReference type="PANTHER" id="PTHR12634:SF8">
    <property type="entry name" value="FIERY MOUNTAIN, ISOFORM D"/>
    <property type="match status" value="1"/>
</dbReference>
<dbReference type="PANTHER" id="PTHR12634">
    <property type="entry name" value="SIT4 YEAST -ASSOCIATING PROTEIN-RELATED"/>
    <property type="match status" value="1"/>
</dbReference>
<dbReference type="Pfam" id="PF04499">
    <property type="entry name" value="SAPS"/>
    <property type="match status" value="1"/>
</dbReference>
<protein>
    <recommendedName>
        <fullName>SIT4-associating protein SAP190</fullName>
    </recommendedName>
</protein>